<protein>
    <recommendedName>
        <fullName evidence="1">Large ribosomal subunit protein uL22</fullName>
    </recommendedName>
    <alternativeName>
        <fullName evidence="2">50S ribosomal protein L22</fullName>
    </alternativeName>
</protein>
<feature type="chain" id="PRO_1000142258" description="Large ribosomal subunit protein uL22">
    <location>
        <begin position="1"/>
        <end position="110"/>
    </location>
</feature>
<evidence type="ECO:0000255" key="1">
    <source>
        <dbReference type="HAMAP-Rule" id="MF_01331"/>
    </source>
</evidence>
<evidence type="ECO:0000305" key="2"/>
<name>RL22_ECODH</name>
<comment type="function">
    <text evidence="1">This protein binds specifically to 23S rRNA; its binding is stimulated by other ribosomal proteins, e.g. L4, L17, and L20. It is important during the early stages of 50S assembly. It makes multiple contacts with different domains of the 23S rRNA in the assembled 50S subunit and ribosome (By similarity).</text>
</comment>
<comment type="function">
    <text evidence="1">The globular domain of the protein is located near the polypeptide exit tunnel on the outside of the subunit, while an extended beta-hairpin is found that lines the wall of the exit tunnel in the center of the 70S ribosome.</text>
</comment>
<comment type="subunit">
    <text evidence="1">Part of the 50S ribosomal subunit.</text>
</comment>
<comment type="similarity">
    <text evidence="1">Belongs to the universal ribosomal protein uL22 family.</text>
</comment>
<proteinExistence type="inferred from homology"/>
<keyword id="KW-0687">Ribonucleoprotein</keyword>
<keyword id="KW-0689">Ribosomal protein</keyword>
<keyword id="KW-0694">RNA-binding</keyword>
<keyword id="KW-0699">rRNA-binding</keyword>
<reference key="1">
    <citation type="journal article" date="2008" name="J. Bacteriol.">
        <title>The complete genome sequence of Escherichia coli DH10B: insights into the biology of a laboratory workhorse.</title>
        <authorList>
            <person name="Durfee T."/>
            <person name="Nelson R."/>
            <person name="Baldwin S."/>
            <person name="Plunkett G. III"/>
            <person name="Burland V."/>
            <person name="Mau B."/>
            <person name="Petrosino J.F."/>
            <person name="Qin X."/>
            <person name="Muzny D.M."/>
            <person name="Ayele M."/>
            <person name="Gibbs R.A."/>
            <person name="Csorgo B."/>
            <person name="Posfai G."/>
            <person name="Weinstock G.M."/>
            <person name="Blattner F.R."/>
        </authorList>
    </citation>
    <scope>NUCLEOTIDE SEQUENCE [LARGE SCALE GENOMIC DNA]</scope>
    <source>
        <strain>K12 / DH10B</strain>
    </source>
</reference>
<organism>
    <name type="scientific">Escherichia coli (strain K12 / DH10B)</name>
    <dbReference type="NCBI Taxonomy" id="316385"/>
    <lineage>
        <taxon>Bacteria</taxon>
        <taxon>Pseudomonadati</taxon>
        <taxon>Pseudomonadota</taxon>
        <taxon>Gammaproteobacteria</taxon>
        <taxon>Enterobacterales</taxon>
        <taxon>Enterobacteriaceae</taxon>
        <taxon>Escherichia</taxon>
    </lineage>
</organism>
<accession>B1X6G6</accession>
<sequence>METIAKHRHARSSAQKVRLVADLIRGKKVSQALDILTYTNKKAAVLVKKVLESAIANAEHNDGADIDDLKVTKIFVDEGPSMKRIMPRAKGRADRILKRTSHITVVVSDR</sequence>
<gene>
    <name evidence="1" type="primary">rplV</name>
    <name type="ordered locus">ECDH10B_3490</name>
</gene>
<dbReference type="EMBL" id="CP000948">
    <property type="protein sequence ID" value="ACB04376.1"/>
    <property type="molecule type" value="Genomic_DNA"/>
</dbReference>
<dbReference type="RefSeq" id="WP_000447529.1">
    <property type="nucleotide sequence ID" value="NC_010473.1"/>
</dbReference>
<dbReference type="SMR" id="B1X6G6"/>
<dbReference type="GeneID" id="93778672"/>
<dbReference type="KEGG" id="ecd:ECDH10B_3490"/>
<dbReference type="HOGENOM" id="CLU_083987_3_3_6"/>
<dbReference type="GO" id="GO:0022625">
    <property type="term" value="C:cytosolic large ribosomal subunit"/>
    <property type="evidence" value="ECO:0007669"/>
    <property type="project" value="TreeGrafter"/>
</dbReference>
<dbReference type="GO" id="GO:0019843">
    <property type="term" value="F:rRNA binding"/>
    <property type="evidence" value="ECO:0007669"/>
    <property type="project" value="UniProtKB-UniRule"/>
</dbReference>
<dbReference type="GO" id="GO:0003735">
    <property type="term" value="F:structural constituent of ribosome"/>
    <property type="evidence" value="ECO:0007669"/>
    <property type="project" value="InterPro"/>
</dbReference>
<dbReference type="GO" id="GO:0006412">
    <property type="term" value="P:translation"/>
    <property type="evidence" value="ECO:0007669"/>
    <property type="project" value="UniProtKB-UniRule"/>
</dbReference>
<dbReference type="CDD" id="cd00336">
    <property type="entry name" value="Ribosomal_L22"/>
    <property type="match status" value="1"/>
</dbReference>
<dbReference type="FunFam" id="3.90.470.10:FF:000001">
    <property type="entry name" value="50S ribosomal protein L22"/>
    <property type="match status" value="1"/>
</dbReference>
<dbReference type="Gene3D" id="3.90.470.10">
    <property type="entry name" value="Ribosomal protein L22/L17"/>
    <property type="match status" value="1"/>
</dbReference>
<dbReference type="HAMAP" id="MF_01331_B">
    <property type="entry name" value="Ribosomal_uL22_B"/>
    <property type="match status" value="1"/>
</dbReference>
<dbReference type="InterPro" id="IPR001063">
    <property type="entry name" value="Ribosomal_uL22"/>
</dbReference>
<dbReference type="InterPro" id="IPR005727">
    <property type="entry name" value="Ribosomal_uL22_bac/chlpt-type"/>
</dbReference>
<dbReference type="InterPro" id="IPR047867">
    <property type="entry name" value="Ribosomal_uL22_bac/org-type"/>
</dbReference>
<dbReference type="InterPro" id="IPR018260">
    <property type="entry name" value="Ribosomal_uL22_CS"/>
</dbReference>
<dbReference type="InterPro" id="IPR036394">
    <property type="entry name" value="Ribosomal_uL22_sf"/>
</dbReference>
<dbReference type="NCBIfam" id="TIGR01044">
    <property type="entry name" value="rplV_bact"/>
    <property type="match status" value="1"/>
</dbReference>
<dbReference type="PANTHER" id="PTHR13501">
    <property type="entry name" value="CHLOROPLAST 50S RIBOSOMAL PROTEIN L22-RELATED"/>
    <property type="match status" value="1"/>
</dbReference>
<dbReference type="PANTHER" id="PTHR13501:SF8">
    <property type="entry name" value="LARGE RIBOSOMAL SUBUNIT PROTEIN UL22M"/>
    <property type="match status" value="1"/>
</dbReference>
<dbReference type="Pfam" id="PF00237">
    <property type="entry name" value="Ribosomal_L22"/>
    <property type="match status" value="1"/>
</dbReference>
<dbReference type="SUPFAM" id="SSF54843">
    <property type="entry name" value="Ribosomal protein L22"/>
    <property type="match status" value="1"/>
</dbReference>
<dbReference type="PROSITE" id="PS00464">
    <property type="entry name" value="RIBOSOMAL_L22"/>
    <property type="match status" value="1"/>
</dbReference>